<sequence length="235" mass="24504">MTSESATVIQMDDGRAPAPAAAGAAAAAAASSSYATAPTSISAAEPAAAPRKTTTVPFLLRSGAEGFRRCLAVIDFLLRVAAFGPTLAAAISTGTADERLSVFTNFFQFHARFDDFPAFTFFLVANAVAAGYLVLSLPFSVVVILRPNKATGGVRLLLLLCDVLIMALLTAAGAAAAAIVYVAHSGNRRANWVPICMQFHGFCQRTSGSVVATFLAVLVFIVLILMAACVIRRSK</sequence>
<reference key="1">
    <citation type="journal article" date="2009" name="Nature">
        <title>The Sorghum bicolor genome and the diversification of grasses.</title>
        <authorList>
            <person name="Paterson A.H."/>
            <person name="Bowers J.E."/>
            <person name="Bruggmann R."/>
            <person name="Dubchak I."/>
            <person name="Grimwood J."/>
            <person name="Gundlach H."/>
            <person name="Haberer G."/>
            <person name="Hellsten U."/>
            <person name="Mitros T."/>
            <person name="Poliakov A."/>
            <person name="Schmutz J."/>
            <person name="Spannagl M."/>
            <person name="Tang H."/>
            <person name="Wang X."/>
            <person name="Wicker T."/>
            <person name="Bharti A.K."/>
            <person name="Chapman J."/>
            <person name="Feltus F.A."/>
            <person name="Gowik U."/>
            <person name="Grigoriev I.V."/>
            <person name="Lyons E."/>
            <person name="Maher C.A."/>
            <person name="Martis M."/>
            <person name="Narechania A."/>
            <person name="Otillar R.P."/>
            <person name="Penning B.W."/>
            <person name="Salamov A.A."/>
            <person name="Wang Y."/>
            <person name="Zhang L."/>
            <person name="Carpita N.C."/>
            <person name="Freeling M."/>
            <person name="Gingle A.R."/>
            <person name="Hash C.T."/>
            <person name="Keller B."/>
            <person name="Klein P."/>
            <person name="Kresovich S."/>
            <person name="McCann M.C."/>
            <person name="Ming R."/>
            <person name="Peterson D.G."/>
            <person name="Mehboob-ur-Rahman M."/>
            <person name="Ware D."/>
            <person name="Westhoff P."/>
            <person name="Mayer K.F.X."/>
            <person name="Messing J."/>
            <person name="Rokhsar D.S."/>
        </authorList>
    </citation>
    <scope>NUCLEOTIDE SEQUENCE [LARGE SCALE GENOMIC DNA]</scope>
    <source>
        <strain>cv. BTx623</strain>
    </source>
</reference>
<reference key="2">
    <citation type="journal article" date="2018" name="Plant J.">
        <title>The Sorghum bicolor reference genome: improved assembly, gene annotations, a transcriptome atlas, and signatures of genome organization.</title>
        <authorList>
            <person name="McCormick R.F."/>
            <person name="Truong S.K."/>
            <person name="Sreedasyam A."/>
            <person name="Jenkins J."/>
            <person name="Shu S."/>
            <person name="Sims D."/>
            <person name="Kennedy M."/>
            <person name="Amirebrahimi M."/>
            <person name="Weers B.D."/>
            <person name="McKinley B."/>
            <person name="Mattison A."/>
            <person name="Morishige D.T."/>
            <person name="Grimwood J."/>
            <person name="Schmutz J."/>
            <person name="Mullet J.E."/>
        </authorList>
    </citation>
    <scope>GENOME REANNOTATION</scope>
    <source>
        <strain>cv. BTx623</strain>
    </source>
</reference>
<reference key="3">
    <citation type="journal article" date="2014" name="Plant Physiol.">
        <title>Functional and evolutionary analysis of the CASPARIAN STRIP MEMBRANE DOMAIN PROTEIN family.</title>
        <authorList>
            <person name="Roppolo D."/>
            <person name="Boeckmann B."/>
            <person name="Pfister A."/>
            <person name="Boutet E."/>
            <person name="Rubio M.C."/>
            <person name="Denervaud-Tendon V."/>
            <person name="Vermeer J.E."/>
            <person name="Gheyselinck J."/>
            <person name="Xenarios I."/>
            <person name="Geldner N."/>
        </authorList>
    </citation>
    <scope>GENE FAMILY</scope>
    <scope>NOMENCLATURE</scope>
</reference>
<comment type="function">
    <text evidence="1">Regulates membrane-cell wall junctions and localized cell wall deposition. Required for establishment of the Casparian strip membrane domain (CSD) and the subsequent formation of Casparian strips, a cell wall modification of the root endodermis that determines an apoplastic barrier between the intraorganismal apoplasm and the extraorganismal apoplasm and prevents lateral diffusion (By similarity).</text>
</comment>
<comment type="subunit">
    <text evidence="1">Homodimer and heterodimers.</text>
</comment>
<comment type="subcellular location">
    <subcellularLocation>
        <location evidence="1">Cell membrane</location>
        <topology evidence="1">Multi-pass membrane protein</topology>
    </subcellularLocation>
    <text evidence="1">Very restricted localization following a belt shape within the plasma membrane which coincides with the position of the Casparian strip membrane domain in the root endodermis.</text>
</comment>
<comment type="similarity">
    <text evidence="3">Belongs to the Casparian strip membrane proteins (CASP) family.</text>
</comment>
<protein>
    <recommendedName>
        <fullName>Casparian strip membrane protein 2</fullName>
        <shortName>SbCASP2</shortName>
    </recommendedName>
</protein>
<name>CASP2_SORBI</name>
<accession>C5YLC9</accession>
<proteinExistence type="evidence at transcript level"/>
<gene>
    <name type="ordered locus">Sb07g000300</name>
</gene>
<evidence type="ECO:0000250" key="1"/>
<evidence type="ECO:0000255" key="2"/>
<evidence type="ECO:0000305" key="3"/>
<organism>
    <name type="scientific">Sorghum bicolor</name>
    <name type="common">Sorghum</name>
    <name type="synonym">Sorghum vulgare</name>
    <dbReference type="NCBI Taxonomy" id="4558"/>
    <lineage>
        <taxon>Eukaryota</taxon>
        <taxon>Viridiplantae</taxon>
        <taxon>Streptophyta</taxon>
        <taxon>Embryophyta</taxon>
        <taxon>Tracheophyta</taxon>
        <taxon>Spermatophyta</taxon>
        <taxon>Magnoliopsida</taxon>
        <taxon>Liliopsida</taxon>
        <taxon>Poales</taxon>
        <taxon>Poaceae</taxon>
        <taxon>PACMAD clade</taxon>
        <taxon>Panicoideae</taxon>
        <taxon>Andropogonodae</taxon>
        <taxon>Andropogoneae</taxon>
        <taxon>Sorghinae</taxon>
        <taxon>Sorghum</taxon>
    </lineage>
</organism>
<feature type="chain" id="PRO_0000391579" description="Casparian strip membrane protein 2">
    <location>
        <begin position="1"/>
        <end position="235"/>
    </location>
</feature>
<feature type="topological domain" description="Cytoplasmic" evidence="2">
    <location>
        <begin position="1"/>
        <end position="70"/>
    </location>
</feature>
<feature type="transmembrane region" description="Helical" evidence="2">
    <location>
        <begin position="71"/>
        <end position="91"/>
    </location>
</feature>
<feature type="topological domain" description="Extracellular" evidence="2">
    <location>
        <begin position="92"/>
        <end position="118"/>
    </location>
</feature>
<feature type="transmembrane region" description="Helical" evidence="2">
    <location>
        <begin position="119"/>
        <end position="139"/>
    </location>
</feature>
<feature type="topological domain" description="Cytoplasmic" evidence="2">
    <location>
        <begin position="140"/>
        <end position="162"/>
    </location>
</feature>
<feature type="transmembrane region" description="Helical" evidence="2">
    <location>
        <begin position="163"/>
        <end position="183"/>
    </location>
</feature>
<feature type="topological domain" description="Extracellular" evidence="2">
    <location>
        <begin position="184"/>
        <end position="210"/>
    </location>
</feature>
<feature type="transmembrane region" description="Helical" evidence="2">
    <location>
        <begin position="211"/>
        <end position="231"/>
    </location>
</feature>
<feature type="topological domain" description="Cytoplasmic" evidence="2">
    <location>
        <begin position="232"/>
        <end position="235"/>
    </location>
</feature>
<dbReference type="EMBL" id="CM000766">
    <property type="protein sequence ID" value="EES13180.1"/>
    <property type="molecule type" value="Genomic_DNA"/>
</dbReference>
<dbReference type="RefSeq" id="XP_002443685.1">
    <property type="nucleotide sequence ID" value="XM_002443640.1"/>
</dbReference>
<dbReference type="FunCoup" id="C5YLC9">
    <property type="interactions" value="1"/>
</dbReference>
<dbReference type="STRING" id="4558.C5YLC9"/>
<dbReference type="EnsemblPlants" id="EES13180">
    <property type="protein sequence ID" value="EES13180"/>
    <property type="gene ID" value="SORBI_3007G001300"/>
</dbReference>
<dbReference type="Gramene" id="EES13180">
    <property type="protein sequence ID" value="EES13180"/>
    <property type="gene ID" value="SORBI_3007G001300"/>
</dbReference>
<dbReference type="KEGG" id="sbi:8064316"/>
<dbReference type="eggNOG" id="ENOG502QZV7">
    <property type="taxonomic scope" value="Eukaryota"/>
</dbReference>
<dbReference type="HOGENOM" id="CLU_066104_3_1_1"/>
<dbReference type="InParanoid" id="C5YLC9"/>
<dbReference type="OMA" id="MPRRTHH"/>
<dbReference type="OrthoDB" id="753675at2759"/>
<dbReference type="Proteomes" id="UP000000768">
    <property type="component" value="Chromosome 7"/>
</dbReference>
<dbReference type="GO" id="GO:0048226">
    <property type="term" value="C:Casparian strip"/>
    <property type="evidence" value="ECO:0000318"/>
    <property type="project" value="GO_Central"/>
</dbReference>
<dbReference type="GO" id="GO:0005886">
    <property type="term" value="C:plasma membrane"/>
    <property type="evidence" value="ECO:0000318"/>
    <property type="project" value="GO_Central"/>
</dbReference>
<dbReference type="GO" id="GO:0042545">
    <property type="term" value="P:cell wall modification"/>
    <property type="evidence" value="ECO:0000318"/>
    <property type="project" value="GO_Central"/>
</dbReference>
<dbReference type="GO" id="GO:0007043">
    <property type="term" value="P:cell-cell junction assembly"/>
    <property type="evidence" value="ECO:0000318"/>
    <property type="project" value="GO_Central"/>
</dbReference>
<dbReference type="InterPro" id="IPR006459">
    <property type="entry name" value="CASP/CASPL"/>
</dbReference>
<dbReference type="InterPro" id="IPR006702">
    <property type="entry name" value="CASP_dom"/>
</dbReference>
<dbReference type="InterPro" id="IPR044173">
    <property type="entry name" value="CASPL"/>
</dbReference>
<dbReference type="NCBIfam" id="TIGR01569">
    <property type="entry name" value="A_tha_TIGR01569"/>
    <property type="match status" value="1"/>
</dbReference>
<dbReference type="PANTHER" id="PTHR36488:SF11">
    <property type="entry name" value="CASP-LIKE PROTEIN"/>
    <property type="match status" value="1"/>
</dbReference>
<dbReference type="PANTHER" id="PTHR36488">
    <property type="entry name" value="CASP-LIKE PROTEIN 1U1"/>
    <property type="match status" value="1"/>
</dbReference>
<dbReference type="Pfam" id="PF04535">
    <property type="entry name" value="CASP_dom"/>
    <property type="match status" value="1"/>
</dbReference>
<keyword id="KW-1003">Cell membrane</keyword>
<keyword id="KW-0961">Cell wall biogenesis/degradation</keyword>
<keyword id="KW-0472">Membrane</keyword>
<keyword id="KW-1185">Reference proteome</keyword>
<keyword id="KW-0812">Transmembrane</keyword>
<keyword id="KW-1133">Transmembrane helix</keyword>